<reference key="1">
    <citation type="journal article" date="2006" name="Genome Biol.">
        <title>The genome of Rhizobium leguminosarum has recognizable core and accessory components.</title>
        <authorList>
            <person name="Young J.P.W."/>
            <person name="Crossman L.C."/>
            <person name="Johnston A.W.B."/>
            <person name="Thomson N.R."/>
            <person name="Ghazoui Z.F."/>
            <person name="Hull K.H."/>
            <person name="Wexler M."/>
            <person name="Curson A.R.J."/>
            <person name="Todd J.D."/>
            <person name="Poole P.S."/>
            <person name="Mauchline T.H."/>
            <person name="East A.K."/>
            <person name="Quail M.A."/>
            <person name="Churcher C."/>
            <person name="Arrowsmith C."/>
            <person name="Cherevach I."/>
            <person name="Chillingworth T."/>
            <person name="Clarke K."/>
            <person name="Cronin A."/>
            <person name="Davis P."/>
            <person name="Fraser A."/>
            <person name="Hance Z."/>
            <person name="Hauser H."/>
            <person name="Jagels K."/>
            <person name="Moule S."/>
            <person name="Mungall K."/>
            <person name="Norbertczak H."/>
            <person name="Rabbinowitsch E."/>
            <person name="Sanders M."/>
            <person name="Simmonds M."/>
            <person name="Whitehead S."/>
            <person name="Parkhill J."/>
        </authorList>
    </citation>
    <scope>NUCLEOTIDE SEQUENCE [LARGE SCALE GENOMIC DNA]</scope>
    <source>
        <strain>DSM 114642 / LMG 32736 / 3841</strain>
    </source>
</reference>
<gene>
    <name evidence="1" type="primary">cobQ</name>
    <name type="ordered locus">RL2836</name>
</gene>
<feature type="chain" id="PRO_0000332379" description="Cobyric acid synthase">
    <location>
        <begin position="1"/>
        <end position="488"/>
    </location>
</feature>
<feature type="domain" description="GATase cobBQ-type" evidence="1">
    <location>
        <begin position="255"/>
        <end position="442"/>
    </location>
</feature>
<feature type="active site" description="Nucleophile" evidence="1">
    <location>
        <position position="337"/>
    </location>
</feature>
<feature type="active site" evidence="1">
    <location>
        <position position="434"/>
    </location>
</feature>
<dbReference type="EMBL" id="AM236080">
    <property type="protein sequence ID" value="CAK08326.1"/>
    <property type="molecule type" value="Genomic_DNA"/>
</dbReference>
<dbReference type="SMR" id="Q1MFE8"/>
<dbReference type="EnsemblBacteria" id="CAK08326">
    <property type="protein sequence ID" value="CAK08326"/>
    <property type="gene ID" value="RL2836"/>
</dbReference>
<dbReference type="KEGG" id="rle:RL2836"/>
<dbReference type="eggNOG" id="COG1492">
    <property type="taxonomic scope" value="Bacteria"/>
</dbReference>
<dbReference type="HOGENOM" id="CLU_019250_2_0_5"/>
<dbReference type="UniPathway" id="UPA00148"/>
<dbReference type="Proteomes" id="UP000006575">
    <property type="component" value="Chromosome"/>
</dbReference>
<dbReference type="GO" id="GO:0015420">
    <property type="term" value="F:ABC-type vitamin B12 transporter activity"/>
    <property type="evidence" value="ECO:0007669"/>
    <property type="project" value="UniProtKB-UniRule"/>
</dbReference>
<dbReference type="GO" id="GO:0003824">
    <property type="term" value="F:catalytic activity"/>
    <property type="evidence" value="ECO:0007669"/>
    <property type="project" value="InterPro"/>
</dbReference>
<dbReference type="GO" id="GO:0009236">
    <property type="term" value="P:cobalamin biosynthetic process"/>
    <property type="evidence" value="ECO:0007669"/>
    <property type="project" value="UniProtKB-UniRule"/>
</dbReference>
<dbReference type="CDD" id="cd05389">
    <property type="entry name" value="CobQ_N"/>
    <property type="match status" value="1"/>
</dbReference>
<dbReference type="CDD" id="cd01750">
    <property type="entry name" value="GATase1_CobQ"/>
    <property type="match status" value="1"/>
</dbReference>
<dbReference type="Gene3D" id="3.40.50.880">
    <property type="match status" value="1"/>
</dbReference>
<dbReference type="Gene3D" id="3.40.50.300">
    <property type="entry name" value="P-loop containing nucleotide triphosphate hydrolases"/>
    <property type="match status" value="1"/>
</dbReference>
<dbReference type="HAMAP" id="MF_00028">
    <property type="entry name" value="CobQ"/>
    <property type="match status" value="1"/>
</dbReference>
<dbReference type="InterPro" id="IPR029062">
    <property type="entry name" value="Class_I_gatase-like"/>
</dbReference>
<dbReference type="InterPro" id="IPR002586">
    <property type="entry name" value="CobQ/CobB/MinD/ParA_Nub-bd_dom"/>
</dbReference>
<dbReference type="InterPro" id="IPR033949">
    <property type="entry name" value="CobQ_GATase1"/>
</dbReference>
<dbReference type="InterPro" id="IPR047045">
    <property type="entry name" value="CobQ_N"/>
</dbReference>
<dbReference type="InterPro" id="IPR004459">
    <property type="entry name" value="CobQ_synth"/>
</dbReference>
<dbReference type="InterPro" id="IPR011698">
    <property type="entry name" value="GATase_3"/>
</dbReference>
<dbReference type="InterPro" id="IPR027417">
    <property type="entry name" value="P-loop_NTPase"/>
</dbReference>
<dbReference type="NCBIfam" id="TIGR00313">
    <property type="entry name" value="cobQ"/>
    <property type="match status" value="1"/>
</dbReference>
<dbReference type="NCBIfam" id="NF001989">
    <property type="entry name" value="PRK00784.1"/>
    <property type="match status" value="1"/>
</dbReference>
<dbReference type="PANTHER" id="PTHR21343:SF1">
    <property type="entry name" value="COBYRIC ACID SYNTHASE"/>
    <property type="match status" value="1"/>
</dbReference>
<dbReference type="PANTHER" id="PTHR21343">
    <property type="entry name" value="DETHIOBIOTIN SYNTHETASE"/>
    <property type="match status" value="1"/>
</dbReference>
<dbReference type="Pfam" id="PF01656">
    <property type="entry name" value="CbiA"/>
    <property type="match status" value="1"/>
</dbReference>
<dbReference type="Pfam" id="PF07685">
    <property type="entry name" value="GATase_3"/>
    <property type="match status" value="1"/>
</dbReference>
<dbReference type="SUPFAM" id="SSF52317">
    <property type="entry name" value="Class I glutamine amidotransferase-like"/>
    <property type="match status" value="1"/>
</dbReference>
<dbReference type="SUPFAM" id="SSF52540">
    <property type="entry name" value="P-loop containing nucleoside triphosphate hydrolases"/>
    <property type="match status" value="1"/>
</dbReference>
<dbReference type="PROSITE" id="PS51274">
    <property type="entry name" value="GATASE_COBBQ"/>
    <property type="match status" value="1"/>
</dbReference>
<name>COBQ_RHIJ3</name>
<sequence length="488" mass="51830">MRATMARAIMLQGTGSDVGKTVLVAGLCRLAANRGLTVRPFKPQNMSNNAAVADDGGEIGRAQWLQSLAARTPSSVQMNPVLLKPQSENGSQIIVQGRVFGQAKGRDYQRLKPELLGAVLESFEKVAAGADLVIVEGAGSPAEINLRAGDIANMGFATRAGVPVVLVGDIDRGGVIASLVGTHAILEDGDRAMIAGYIINKFRGDVSLFDDGVRAIEGFTGWPCFGIVPWLRGAARLPAEDSVVLERLVRGGAGALKIAVPVLPRIANFDDLDPLRSEPDVELVFVRSGERIPADASLVVLPGSKSTISDLADFRAQGWDRDLQAHVRRGGRVIGICGGYQMLGRMVHDPLGIEGGTLETPGLGLLDIETEMAPEKTVRNSQARSTEYDAPLAGYQIHLGVTRGPDCDRPSAIIDGASDGALSADGRIMGTYLHGLFGSDAYRAGLLQSFGLSGERRNYRESVEQALDEIAGELERHLDPRWLAGLLG</sequence>
<keyword id="KW-0169">Cobalamin biosynthesis</keyword>
<keyword id="KW-0315">Glutamine amidotransferase</keyword>
<protein>
    <recommendedName>
        <fullName evidence="1">Cobyric acid synthase</fullName>
    </recommendedName>
</protein>
<proteinExistence type="inferred from homology"/>
<accession>Q1MFE8</accession>
<evidence type="ECO:0000255" key="1">
    <source>
        <dbReference type="HAMAP-Rule" id="MF_00028"/>
    </source>
</evidence>
<comment type="function">
    <text evidence="1">Catalyzes amidations at positions B, D, E, and G on adenosylcobyrinic A,C-diamide. NH(2) groups are provided by glutamine, and one molecule of ATP is hydrogenolyzed for each amidation.</text>
</comment>
<comment type="pathway">
    <text evidence="1">Cofactor biosynthesis; adenosylcobalamin biosynthesis.</text>
</comment>
<comment type="similarity">
    <text evidence="1">Belongs to the CobB/CobQ family. CobQ subfamily.</text>
</comment>
<organism>
    <name type="scientific">Rhizobium johnstonii (strain DSM 114642 / LMG 32736 / 3841)</name>
    <name type="common">Rhizobium leguminosarum bv. viciae</name>
    <dbReference type="NCBI Taxonomy" id="216596"/>
    <lineage>
        <taxon>Bacteria</taxon>
        <taxon>Pseudomonadati</taxon>
        <taxon>Pseudomonadota</taxon>
        <taxon>Alphaproteobacteria</taxon>
        <taxon>Hyphomicrobiales</taxon>
        <taxon>Rhizobiaceae</taxon>
        <taxon>Rhizobium/Agrobacterium group</taxon>
        <taxon>Rhizobium</taxon>
        <taxon>Rhizobium johnstonii</taxon>
    </lineage>
</organism>